<keyword id="KW-0963">Cytoplasm</keyword>
<keyword id="KW-0251">Elongation factor</keyword>
<keyword id="KW-0342">GTP-binding</keyword>
<keyword id="KW-0378">Hydrolase</keyword>
<keyword id="KW-0460">Magnesium</keyword>
<keyword id="KW-0479">Metal-binding</keyword>
<keyword id="KW-0547">Nucleotide-binding</keyword>
<keyword id="KW-0648">Protein biosynthesis</keyword>
<accession>A5WGK9</accession>
<proteinExistence type="inferred from homology"/>
<gene>
    <name evidence="2" type="primary">tuf1</name>
    <name type="ordered locus">PsycPRwf_1860</name>
</gene>
<protein>
    <recommendedName>
        <fullName evidence="2">Elongation factor Tu 1</fullName>
        <shortName evidence="2">EF-Tu 1</shortName>
        <ecNumber evidence="2">3.6.5.3</ecNumber>
    </recommendedName>
</protein>
<feature type="chain" id="PRO_0000337481" description="Elongation factor Tu 1">
    <location>
        <begin position="1"/>
        <end position="396"/>
    </location>
</feature>
<feature type="domain" description="tr-type G">
    <location>
        <begin position="10"/>
        <end position="206"/>
    </location>
</feature>
<feature type="region of interest" description="G1" evidence="1">
    <location>
        <begin position="19"/>
        <end position="26"/>
    </location>
</feature>
<feature type="region of interest" description="G2" evidence="1">
    <location>
        <begin position="60"/>
        <end position="64"/>
    </location>
</feature>
<feature type="region of interest" description="G3" evidence="1">
    <location>
        <begin position="81"/>
        <end position="84"/>
    </location>
</feature>
<feature type="region of interest" description="G4" evidence="1">
    <location>
        <begin position="136"/>
        <end position="139"/>
    </location>
</feature>
<feature type="region of interest" description="G5" evidence="1">
    <location>
        <begin position="174"/>
        <end position="176"/>
    </location>
</feature>
<feature type="binding site" evidence="2">
    <location>
        <begin position="19"/>
        <end position="26"/>
    </location>
    <ligand>
        <name>GTP</name>
        <dbReference type="ChEBI" id="CHEBI:37565"/>
    </ligand>
</feature>
<feature type="binding site" evidence="2">
    <location>
        <position position="26"/>
    </location>
    <ligand>
        <name>Mg(2+)</name>
        <dbReference type="ChEBI" id="CHEBI:18420"/>
    </ligand>
</feature>
<feature type="binding site" evidence="2">
    <location>
        <begin position="81"/>
        <end position="85"/>
    </location>
    <ligand>
        <name>GTP</name>
        <dbReference type="ChEBI" id="CHEBI:37565"/>
    </ligand>
</feature>
<feature type="binding site" evidence="2">
    <location>
        <begin position="136"/>
        <end position="139"/>
    </location>
    <ligand>
        <name>GTP</name>
        <dbReference type="ChEBI" id="CHEBI:37565"/>
    </ligand>
</feature>
<sequence>MAKAKFERNKPHVNVGTIGHVDHGKTTLTAAIATVAAKTFGGEAKDYAAIDSAPEEKARGITINTSHIEYDTADRHYAHVDCPGHADYVKNMITGAAQMDGAILVVSATDGPMPQTREHILLSRQVGVPYIMVFMNKCDMVDDEELLELVEMEVRELLSDYDFPGDDTPIIKGSALEALNGKDGKYGEPAVIELLQTLDTYIPEPERDIDKPFLMPIEDVFSISGRGTVVTGRVESGIVKVGDEIEIVGIRDTQKTTCTGVEMFRKLLDEGRAGENCGVLLRGTKREDVQRGQVLAKPGSITPHTKFDAEVYVLSKEEGGRHTPFLNGYRPQFYFRTTDVTGAISLQEGTEMVMPGDNVEMSVELIHPIAMDKGLRFAIREGGRTVGAGVVANVKD</sequence>
<dbReference type="EC" id="3.6.5.3" evidence="2"/>
<dbReference type="EMBL" id="CP000713">
    <property type="protein sequence ID" value="ABQ94800.1"/>
    <property type="molecule type" value="Genomic_DNA"/>
</dbReference>
<dbReference type="SMR" id="A5WGK9"/>
<dbReference type="STRING" id="349106.PsycPRwf_1860"/>
<dbReference type="KEGG" id="prw:PsycPRwf_1860"/>
<dbReference type="eggNOG" id="COG0050">
    <property type="taxonomic scope" value="Bacteria"/>
</dbReference>
<dbReference type="HOGENOM" id="CLU_007265_0_0_6"/>
<dbReference type="GO" id="GO:0005829">
    <property type="term" value="C:cytosol"/>
    <property type="evidence" value="ECO:0007669"/>
    <property type="project" value="TreeGrafter"/>
</dbReference>
<dbReference type="GO" id="GO:0005525">
    <property type="term" value="F:GTP binding"/>
    <property type="evidence" value="ECO:0007669"/>
    <property type="project" value="UniProtKB-UniRule"/>
</dbReference>
<dbReference type="GO" id="GO:0003924">
    <property type="term" value="F:GTPase activity"/>
    <property type="evidence" value="ECO:0007669"/>
    <property type="project" value="InterPro"/>
</dbReference>
<dbReference type="GO" id="GO:0097216">
    <property type="term" value="F:guanosine tetraphosphate binding"/>
    <property type="evidence" value="ECO:0007669"/>
    <property type="project" value="UniProtKB-ARBA"/>
</dbReference>
<dbReference type="GO" id="GO:0003746">
    <property type="term" value="F:translation elongation factor activity"/>
    <property type="evidence" value="ECO:0007669"/>
    <property type="project" value="UniProtKB-UniRule"/>
</dbReference>
<dbReference type="CDD" id="cd01884">
    <property type="entry name" value="EF_Tu"/>
    <property type="match status" value="1"/>
</dbReference>
<dbReference type="CDD" id="cd03697">
    <property type="entry name" value="EFTU_II"/>
    <property type="match status" value="1"/>
</dbReference>
<dbReference type="CDD" id="cd03707">
    <property type="entry name" value="EFTU_III"/>
    <property type="match status" value="1"/>
</dbReference>
<dbReference type="FunFam" id="2.40.30.10:FF:000001">
    <property type="entry name" value="Elongation factor Tu"/>
    <property type="match status" value="1"/>
</dbReference>
<dbReference type="FunFam" id="3.40.50.300:FF:000003">
    <property type="entry name" value="Elongation factor Tu"/>
    <property type="match status" value="1"/>
</dbReference>
<dbReference type="Gene3D" id="3.40.50.300">
    <property type="entry name" value="P-loop containing nucleotide triphosphate hydrolases"/>
    <property type="match status" value="1"/>
</dbReference>
<dbReference type="Gene3D" id="2.40.30.10">
    <property type="entry name" value="Translation factors"/>
    <property type="match status" value="2"/>
</dbReference>
<dbReference type="HAMAP" id="MF_00118_B">
    <property type="entry name" value="EF_Tu_B"/>
    <property type="match status" value="1"/>
</dbReference>
<dbReference type="InterPro" id="IPR041709">
    <property type="entry name" value="EF-Tu_GTP-bd"/>
</dbReference>
<dbReference type="InterPro" id="IPR050055">
    <property type="entry name" value="EF-Tu_GTPase"/>
</dbReference>
<dbReference type="InterPro" id="IPR004161">
    <property type="entry name" value="EFTu-like_2"/>
</dbReference>
<dbReference type="InterPro" id="IPR033720">
    <property type="entry name" value="EFTU_2"/>
</dbReference>
<dbReference type="InterPro" id="IPR031157">
    <property type="entry name" value="G_TR_CS"/>
</dbReference>
<dbReference type="InterPro" id="IPR027417">
    <property type="entry name" value="P-loop_NTPase"/>
</dbReference>
<dbReference type="InterPro" id="IPR005225">
    <property type="entry name" value="Small_GTP-bd"/>
</dbReference>
<dbReference type="InterPro" id="IPR000795">
    <property type="entry name" value="T_Tr_GTP-bd_dom"/>
</dbReference>
<dbReference type="InterPro" id="IPR009000">
    <property type="entry name" value="Transl_B-barrel_sf"/>
</dbReference>
<dbReference type="InterPro" id="IPR009001">
    <property type="entry name" value="Transl_elong_EF1A/Init_IF2_C"/>
</dbReference>
<dbReference type="InterPro" id="IPR004541">
    <property type="entry name" value="Transl_elong_EFTu/EF1A_bac/org"/>
</dbReference>
<dbReference type="InterPro" id="IPR004160">
    <property type="entry name" value="Transl_elong_EFTu/EF1A_C"/>
</dbReference>
<dbReference type="NCBIfam" id="TIGR00485">
    <property type="entry name" value="EF-Tu"/>
    <property type="match status" value="1"/>
</dbReference>
<dbReference type="NCBIfam" id="NF000766">
    <property type="entry name" value="PRK00049.1"/>
    <property type="match status" value="1"/>
</dbReference>
<dbReference type="NCBIfam" id="NF009372">
    <property type="entry name" value="PRK12735.1"/>
    <property type="match status" value="1"/>
</dbReference>
<dbReference type="NCBIfam" id="NF009373">
    <property type="entry name" value="PRK12736.1"/>
    <property type="match status" value="1"/>
</dbReference>
<dbReference type="NCBIfam" id="TIGR00231">
    <property type="entry name" value="small_GTP"/>
    <property type="match status" value="1"/>
</dbReference>
<dbReference type="PANTHER" id="PTHR43721:SF22">
    <property type="entry name" value="ELONGATION FACTOR TU, MITOCHONDRIAL"/>
    <property type="match status" value="1"/>
</dbReference>
<dbReference type="PANTHER" id="PTHR43721">
    <property type="entry name" value="ELONGATION FACTOR TU-RELATED"/>
    <property type="match status" value="1"/>
</dbReference>
<dbReference type="Pfam" id="PF00009">
    <property type="entry name" value="GTP_EFTU"/>
    <property type="match status" value="1"/>
</dbReference>
<dbReference type="Pfam" id="PF03144">
    <property type="entry name" value="GTP_EFTU_D2"/>
    <property type="match status" value="1"/>
</dbReference>
<dbReference type="Pfam" id="PF03143">
    <property type="entry name" value="GTP_EFTU_D3"/>
    <property type="match status" value="1"/>
</dbReference>
<dbReference type="PRINTS" id="PR00315">
    <property type="entry name" value="ELONGATNFCT"/>
</dbReference>
<dbReference type="SUPFAM" id="SSF50465">
    <property type="entry name" value="EF-Tu/eEF-1alpha/eIF2-gamma C-terminal domain"/>
    <property type="match status" value="1"/>
</dbReference>
<dbReference type="SUPFAM" id="SSF52540">
    <property type="entry name" value="P-loop containing nucleoside triphosphate hydrolases"/>
    <property type="match status" value="1"/>
</dbReference>
<dbReference type="SUPFAM" id="SSF50447">
    <property type="entry name" value="Translation proteins"/>
    <property type="match status" value="1"/>
</dbReference>
<dbReference type="PROSITE" id="PS00301">
    <property type="entry name" value="G_TR_1"/>
    <property type="match status" value="1"/>
</dbReference>
<dbReference type="PROSITE" id="PS51722">
    <property type="entry name" value="G_TR_2"/>
    <property type="match status" value="1"/>
</dbReference>
<comment type="function">
    <text evidence="2">GTP hydrolase that promotes the GTP-dependent binding of aminoacyl-tRNA to the A-site of ribosomes during protein biosynthesis.</text>
</comment>
<comment type="catalytic activity">
    <reaction evidence="2">
        <text>GTP + H2O = GDP + phosphate + H(+)</text>
        <dbReference type="Rhea" id="RHEA:19669"/>
        <dbReference type="ChEBI" id="CHEBI:15377"/>
        <dbReference type="ChEBI" id="CHEBI:15378"/>
        <dbReference type="ChEBI" id="CHEBI:37565"/>
        <dbReference type="ChEBI" id="CHEBI:43474"/>
        <dbReference type="ChEBI" id="CHEBI:58189"/>
        <dbReference type="EC" id="3.6.5.3"/>
    </reaction>
    <physiologicalReaction direction="left-to-right" evidence="2">
        <dbReference type="Rhea" id="RHEA:19670"/>
    </physiologicalReaction>
</comment>
<comment type="subunit">
    <text evidence="2">Monomer.</text>
</comment>
<comment type="subcellular location">
    <subcellularLocation>
        <location evidence="2">Cytoplasm</location>
    </subcellularLocation>
</comment>
<comment type="similarity">
    <text evidence="2">Belongs to the TRAFAC class translation factor GTPase superfamily. Classic translation factor GTPase family. EF-Tu/EF-1A subfamily.</text>
</comment>
<evidence type="ECO:0000250" key="1"/>
<evidence type="ECO:0000255" key="2">
    <source>
        <dbReference type="HAMAP-Rule" id="MF_00118"/>
    </source>
</evidence>
<organism>
    <name type="scientific">Psychrobacter sp. (strain PRwf-1)</name>
    <dbReference type="NCBI Taxonomy" id="349106"/>
    <lineage>
        <taxon>Bacteria</taxon>
        <taxon>Pseudomonadati</taxon>
        <taxon>Pseudomonadota</taxon>
        <taxon>Gammaproteobacteria</taxon>
        <taxon>Moraxellales</taxon>
        <taxon>Moraxellaceae</taxon>
        <taxon>Psychrobacter</taxon>
    </lineage>
</organism>
<reference key="1">
    <citation type="submission" date="2007-05" db="EMBL/GenBank/DDBJ databases">
        <title>Complete sequence of chromosome of Psychrobacter sp. PRwf-1.</title>
        <authorList>
            <consortium name="US DOE Joint Genome Institute"/>
            <person name="Copeland A."/>
            <person name="Lucas S."/>
            <person name="Lapidus A."/>
            <person name="Barry K."/>
            <person name="Detter J.C."/>
            <person name="Glavina del Rio T."/>
            <person name="Hammon N."/>
            <person name="Israni S."/>
            <person name="Dalin E."/>
            <person name="Tice H."/>
            <person name="Pitluck S."/>
            <person name="Chain P."/>
            <person name="Malfatti S."/>
            <person name="Shin M."/>
            <person name="Vergez L."/>
            <person name="Schmutz J."/>
            <person name="Larimer F."/>
            <person name="Land M."/>
            <person name="Hauser L."/>
            <person name="Kyrpides N."/>
            <person name="Kim E."/>
            <person name="Tiedje J."/>
            <person name="Richardson P."/>
        </authorList>
    </citation>
    <scope>NUCLEOTIDE SEQUENCE [LARGE SCALE GENOMIC DNA]</scope>
    <source>
        <strain>PRwf-1</strain>
    </source>
</reference>
<name>EFTU1_PSYWF</name>